<gene>
    <name type="ordered locus">RA0666</name>
    <name type="ORF">SMa1223</name>
</gene>
<name>Y4066_RHIME</name>
<feature type="chain" id="PRO_0000160644" description="Uncharacterized protein RA0666">
    <location>
        <begin position="1"/>
        <end position="151"/>
    </location>
</feature>
<geneLocation type="plasmid">
    <name>pSymA</name>
    <name>megaplasmid 1</name>
</geneLocation>
<proteinExistence type="predicted"/>
<dbReference type="EMBL" id="X15079">
    <property type="protein sequence ID" value="CAA33184.1"/>
    <property type="molecule type" value="Genomic_DNA"/>
</dbReference>
<dbReference type="EMBL" id="Z21854">
    <property type="protein sequence ID" value="CAA79900.1"/>
    <property type="molecule type" value="Genomic_DNA"/>
</dbReference>
<dbReference type="EMBL" id="AE006469">
    <property type="protein sequence ID" value="AAK65324.1"/>
    <property type="molecule type" value="Genomic_DNA"/>
</dbReference>
<dbReference type="PIR" id="B95345">
    <property type="entry name" value="B95345"/>
</dbReference>
<dbReference type="PIR" id="S04123">
    <property type="entry name" value="S04123"/>
</dbReference>
<dbReference type="RefSeq" id="NP_435912.1">
    <property type="nucleotide sequence ID" value="NC_003037.1"/>
</dbReference>
<dbReference type="RefSeq" id="WP_010967645.1">
    <property type="nucleotide sequence ID" value="NC_003037.1"/>
</dbReference>
<dbReference type="SMR" id="P13486"/>
<dbReference type="EnsemblBacteria" id="AAK65324">
    <property type="protein sequence ID" value="AAK65324"/>
    <property type="gene ID" value="SMa1223"/>
</dbReference>
<dbReference type="KEGG" id="sme:SMa1223"/>
<dbReference type="PATRIC" id="fig|266834.11.peg.686"/>
<dbReference type="HOGENOM" id="CLU_067890_3_0_5"/>
<dbReference type="OrthoDB" id="8137294at2"/>
<dbReference type="PRO" id="PR:P13486"/>
<dbReference type="Proteomes" id="UP000001976">
    <property type="component" value="Plasmid pSymA"/>
</dbReference>
<dbReference type="GO" id="GO:0009399">
    <property type="term" value="P:nitrogen fixation"/>
    <property type="evidence" value="ECO:0007669"/>
    <property type="project" value="UniProtKB-KW"/>
</dbReference>
<dbReference type="Gene3D" id="2.30.110.10">
    <property type="entry name" value="Electron Transport, Fmn-binding Protein, Chain A"/>
    <property type="match status" value="1"/>
</dbReference>
<dbReference type="InterPro" id="IPR024747">
    <property type="entry name" value="Pyridox_Oxase-rel"/>
</dbReference>
<dbReference type="InterPro" id="IPR012349">
    <property type="entry name" value="Split_barrel_FMN-bd"/>
</dbReference>
<dbReference type="Pfam" id="PF12900">
    <property type="entry name" value="Pyridox_ox_2"/>
    <property type="match status" value="1"/>
</dbReference>
<dbReference type="SUPFAM" id="SSF50475">
    <property type="entry name" value="FMN-binding split barrel"/>
    <property type="match status" value="1"/>
</dbReference>
<protein>
    <recommendedName>
        <fullName>Uncharacterized protein RA0666</fullName>
    </recommendedName>
</protein>
<sequence>MFVRVMSREECQGVVAAGDLARLACCRDDQPYIVPITYAHSGNRLYCFSMPGQKIDWMRSNPKVSLQIAEFASNRQWKSVVVTGRYQELPATQGCHHERIHAWSLLEKKPNWWEPGGLKPVPQEISGASAHIFFCVEMDEMTGRAACAGEL</sequence>
<accession>P13486</accession>
<organism>
    <name type="scientific">Rhizobium meliloti (strain 1021)</name>
    <name type="common">Ensifer meliloti</name>
    <name type="synonym">Sinorhizobium meliloti</name>
    <dbReference type="NCBI Taxonomy" id="266834"/>
    <lineage>
        <taxon>Bacteria</taxon>
        <taxon>Pseudomonadati</taxon>
        <taxon>Pseudomonadota</taxon>
        <taxon>Alphaproteobacteria</taxon>
        <taxon>Hyphomicrobiales</taxon>
        <taxon>Rhizobiaceae</taxon>
        <taxon>Sinorhizobium/Ensifer group</taxon>
        <taxon>Sinorhizobium</taxon>
    </lineage>
</organism>
<reference key="1">
    <citation type="journal article" date="1989" name="EMBO J.">
        <title>fixK, a gene homologous with fnr and crp from Escherichia coli, regulates nitrogen fixation genes both positively and negatively in Rhizobium meliloti.</title>
        <authorList>
            <person name="Batut J."/>
            <person name="Daveran-Mingot M.-L."/>
            <person name="David M."/>
            <person name="Jacobs J."/>
            <person name="Garnerone A.-M."/>
            <person name="Kahn D."/>
        </authorList>
    </citation>
    <scope>NUCLEOTIDE SEQUENCE [GENOMIC DNA]</scope>
</reference>
<reference key="2">
    <citation type="journal article" date="2001" name="Proc. Natl. Acad. Sci. U.S.A.">
        <title>Nucleotide sequence and predicted functions of the entire Sinorhizobium meliloti pSymA megaplasmid.</title>
        <authorList>
            <person name="Barnett M.J."/>
            <person name="Fisher R.F."/>
            <person name="Jones T."/>
            <person name="Komp C."/>
            <person name="Abola A.P."/>
            <person name="Barloy-Hubler F."/>
            <person name="Bowser L."/>
            <person name="Capela D."/>
            <person name="Galibert F."/>
            <person name="Gouzy J."/>
            <person name="Gurjal M."/>
            <person name="Hong A."/>
            <person name="Huizar L."/>
            <person name="Hyman R.W."/>
            <person name="Kahn D."/>
            <person name="Kahn M.L."/>
            <person name="Kalman S."/>
            <person name="Keating D.H."/>
            <person name="Palm C."/>
            <person name="Peck M.C."/>
            <person name="Surzycki R."/>
            <person name="Wells D.H."/>
            <person name="Yeh K.-C."/>
            <person name="Davis R.W."/>
            <person name="Federspiel N.A."/>
            <person name="Long S.R."/>
        </authorList>
    </citation>
    <scope>NUCLEOTIDE SEQUENCE [LARGE SCALE GENOMIC DNA]</scope>
    <source>
        <strain>1021</strain>
    </source>
</reference>
<reference key="3">
    <citation type="journal article" date="2001" name="Science">
        <title>The composite genome of the legume symbiont Sinorhizobium meliloti.</title>
        <authorList>
            <person name="Galibert F."/>
            <person name="Finan T.M."/>
            <person name="Long S.R."/>
            <person name="Puehler A."/>
            <person name="Abola P."/>
            <person name="Ampe F."/>
            <person name="Barloy-Hubler F."/>
            <person name="Barnett M.J."/>
            <person name="Becker A."/>
            <person name="Boistard P."/>
            <person name="Bothe G."/>
            <person name="Boutry M."/>
            <person name="Bowser L."/>
            <person name="Buhrmester J."/>
            <person name="Cadieu E."/>
            <person name="Capela D."/>
            <person name="Chain P."/>
            <person name="Cowie A."/>
            <person name="Davis R.W."/>
            <person name="Dreano S."/>
            <person name="Federspiel N.A."/>
            <person name="Fisher R.F."/>
            <person name="Gloux S."/>
            <person name="Godrie T."/>
            <person name="Goffeau A."/>
            <person name="Golding B."/>
            <person name="Gouzy J."/>
            <person name="Gurjal M."/>
            <person name="Hernandez-Lucas I."/>
            <person name="Hong A."/>
            <person name="Huizar L."/>
            <person name="Hyman R.W."/>
            <person name="Jones T."/>
            <person name="Kahn D."/>
            <person name="Kahn M.L."/>
            <person name="Kalman S."/>
            <person name="Keating D.H."/>
            <person name="Kiss E."/>
            <person name="Komp C."/>
            <person name="Lelaure V."/>
            <person name="Masuy D."/>
            <person name="Palm C."/>
            <person name="Peck M.C."/>
            <person name="Pohl T.M."/>
            <person name="Portetelle D."/>
            <person name="Purnelle B."/>
            <person name="Ramsperger U."/>
            <person name="Surzycki R."/>
            <person name="Thebault P."/>
            <person name="Vandenbol M."/>
            <person name="Vorhoelter F.J."/>
            <person name="Weidner S."/>
            <person name="Wells D.H."/>
            <person name="Wong K."/>
            <person name="Yeh K.-C."/>
            <person name="Batut J."/>
        </authorList>
    </citation>
    <scope>NUCLEOTIDE SEQUENCE [LARGE SCALE GENOMIC DNA]</scope>
    <source>
        <strain>1021</strain>
    </source>
</reference>
<keyword id="KW-0535">Nitrogen fixation</keyword>
<keyword id="KW-0614">Plasmid</keyword>
<keyword id="KW-1185">Reference proteome</keyword>